<protein>
    <recommendedName>
        <fullName evidence="1">Flagellar P-ring protein</fullName>
    </recommendedName>
    <alternativeName>
        <fullName evidence="1">Basal body P-ring protein</fullName>
    </alternativeName>
</protein>
<keyword id="KW-0975">Bacterial flagellum</keyword>
<keyword id="KW-0574">Periplasm</keyword>
<keyword id="KW-1185">Reference proteome</keyword>
<keyword id="KW-0732">Signal</keyword>
<accession>Q2ITH2</accession>
<proteinExistence type="inferred from homology"/>
<comment type="function">
    <text evidence="1">Assembles around the rod to form the L-ring and probably protects the motor/basal body from shearing forces during rotation.</text>
</comment>
<comment type="subunit">
    <text evidence="1">The basal body constitutes a major portion of the flagellar organelle and consists of four rings (L,P,S, and M) mounted on a central rod.</text>
</comment>
<comment type="subcellular location">
    <subcellularLocation>
        <location evidence="1">Periplasm</location>
    </subcellularLocation>
    <subcellularLocation>
        <location evidence="1">Bacterial flagellum basal body</location>
    </subcellularLocation>
</comment>
<comment type="similarity">
    <text evidence="1">Belongs to the FlgI family.</text>
</comment>
<dbReference type="EMBL" id="CP000250">
    <property type="protein sequence ID" value="ABD08488.1"/>
    <property type="molecule type" value="Genomic_DNA"/>
</dbReference>
<dbReference type="RefSeq" id="WP_011442672.1">
    <property type="nucleotide sequence ID" value="NC_007778.1"/>
</dbReference>
<dbReference type="SMR" id="Q2ITH2"/>
<dbReference type="STRING" id="316058.RPB_3794"/>
<dbReference type="KEGG" id="rpb:RPB_3794"/>
<dbReference type="eggNOG" id="COG1706">
    <property type="taxonomic scope" value="Bacteria"/>
</dbReference>
<dbReference type="HOGENOM" id="CLU_045235_1_0_5"/>
<dbReference type="OrthoDB" id="9786431at2"/>
<dbReference type="Proteomes" id="UP000008809">
    <property type="component" value="Chromosome"/>
</dbReference>
<dbReference type="GO" id="GO:0009428">
    <property type="term" value="C:bacterial-type flagellum basal body, distal rod, P ring"/>
    <property type="evidence" value="ECO:0007669"/>
    <property type="project" value="InterPro"/>
</dbReference>
<dbReference type="GO" id="GO:0030288">
    <property type="term" value="C:outer membrane-bounded periplasmic space"/>
    <property type="evidence" value="ECO:0007669"/>
    <property type="project" value="InterPro"/>
</dbReference>
<dbReference type="GO" id="GO:0005198">
    <property type="term" value="F:structural molecule activity"/>
    <property type="evidence" value="ECO:0007669"/>
    <property type="project" value="InterPro"/>
</dbReference>
<dbReference type="GO" id="GO:0071973">
    <property type="term" value="P:bacterial-type flagellum-dependent cell motility"/>
    <property type="evidence" value="ECO:0007669"/>
    <property type="project" value="InterPro"/>
</dbReference>
<dbReference type="HAMAP" id="MF_00416">
    <property type="entry name" value="FlgI"/>
    <property type="match status" value="1"/>
</dbReference>
<dbReference type="InterPro" id="IPR001782">
    <property type="entry name" value="Flag_FlgI"/>
</dbReference>
<dbReference type="NCBIfam" id="NF003676">
    <property type="entry name" value="PRK05303.1"/>
    <property type="match status" value="1"/>
</dbReference>
<dbReference type="PANTHER" id="PTHR30381">
    <property type="entry name" value="FLAGELLAR P-RING PERIPLASMIC PROTEIN FLGI"/>
    <property type="match status" value="1"/>
</dbReference>
<dbReference type="PANTHER" id="PTHR30381:SF0">
    <property type="entry name" value="FLAGELLAR P-RING PROTEIN"/>
    <property type="match status" value="1"/>
</dbReference>
<dbReference type="Pfam" id="PF02119">
    <property type="entry name" value="FlgI"/>
    <property type="match status" value="1"/>
</dbReference>
<dbReference type="PRINTS" id="PR01010">
    <property type="entry name" value="FLGPRINGFLGI"/>
</dbReference>
<reference key="1">
    <citation type="submission" date="2006-01" db="EMBL/GenBank/DDBJ databases">
        <title>Complete sequence of Rhodopseudomonas palustris HaA2.</title>
        <authorList>
            <consortium name="US DOE Joint Genome Institute"/>
            <person name="Copeland A."/>
            <person name="Lucas S."/>
            <person name="Lapidus A."/>
            <person name="Barry K."/>
            <person name="Detter J.C."/>
            <person name="Glavina T."/>
            <person name="Hammon N."/>
            <person name="Israni S."/>
            <person name="Pitluck S."/>
            <person name="Chain P."/>
            <person name="Malfatti S."/>
            <person name="Shin M."/>
            <person name="Vergez L."/>
            <person name="Schmutz J."/>
            <person name="Larimer F."/>
            <person name="Land M."/>
            <person name="Hauser L."/>
            <person name="Pelletier D.A."/>
            <person name="Kyrpides N."/>
            <person name="Anderson I."/>
            <person name="Oda Y."/>
            <person name="Harwood C.S."/>
            <person name="Richardson P."/>
        </authorList>
    </citation>
    <scope>NUCLEOTIDE SEQUENCE [LARGE SCALE GENOMIC DNA]</scope>
    <source>
        <strain>HaA2</strain>
    </source>
</reference>
<name>FLGI_RHOP2</name>
<evidence type="ECO:0000255" key="1">
    <source>
        <dbReference type="HAMAP-Rule" id="MF_00416"/>
    </source>
</evidence>
<gene>
    <name evidence="1" type="primary">flgI</name>
    <name type="ordered locus">RPB_3794</name>
</gene>
<sequence length="373" mass="38550">MPSVSAVILKLAAAALSALLLSGVAANATSRIKDLANIEGVRQNQLIGYGLVVGLNGTGDTLNNIPFTKQSLQAMLERMGVNIRGATIRTGNVAAVMVTGNLPAFATQGTRMDVTVSALGDAKNLQGGTLLVTPLLGADGNVYAVAQGSLAIGGFQAEGEAAKITRGVPTVGRIANGAIIEREIEFALNRLPMVRLALRNADFTTAKRIAAAVNDFLGTKSAEPIDPSTVQLTIPAEFKGNAVAFVTEIEQLQVEPDQAAKIIIDERSGIIVMGRDVRVATVAVAQGNLTVSISESPQVSQPNPLANGRTVVTPNSRIGVTEDGKKLALVKDGVSLQQLVDGLNGLGIGPRDLIGILQAIKAAGAIEADIEVM</sequence>
<organism>
    <name type="scientific">Rhodopseudomonas palustris (strain HaA2)</name>
    <dbReference type="NCBI Taxonomy" id="316058"/>
    <lineage>
        <taxon>Bacteria</taxon>
        <taxon>Pseudomonadati</taxon>
        <taxon>Pseudomonadota</taxon>
        <taxon>Alphaproteobacteria</taxon>
        <taxon>Hyphomicrobiales</taxon>
        <taxon>Nitrobacteraceae</taxon>
        <taxon>Rhodopseudomonas</taxon>
    </lineage>
</organism>
<feature type="signal peptide" evidence="1">
    <location>
        <begin position="1"/>
        <end position="28"/>
    </location>
</feature>
<feature type="chain" id="PRO_5000107642" description="Flagellar P-ring protein">
    <location>
        <begin position="29"/>
        <end position="373"/>
    </location>
</feature>